<reference key="1">
    <citation type="journal article" date="2000" name="J. Neurosci.">
        <title>The SNARE Vti1a-beta is localized to small synaptic vesicles and participates in a novel SNARE complex.</title>
        <authorList>
            <person name="Antonin W."/>
            <person name="Riedel D."/>
            <person name="Fischer von Mollard G."/>
        </authorList>
    </citation>
    <scope>NUCLEOTIDE SEQUENCE [MRNA] (ISOFORMS 1 AND 2)</scope>
    <source>
        <strain>Sprague-Dawley</strain>
        <tissue>Cerebellum</tissue>
        <tissue>Lung</tissue>
    </source>
</reference>
<reference key="2">
    <citation type="journal article" date="1998" name="J. Biol. Chem.">
        <title>A 29-kilodalton Golgi soluble N-ethylmaleimide-sensitive factor attachment protein receptor (Vti1-rp2) implicated in protein trafficking in the secretory pathway.</title>
        <authorList>
            <person name="Xu Y."/>
            <person name="Wong S.H."/>
            <person name="Tang B.L."/>
            <person name="Subramaniam V.N."/>
            <person name="Zhang T."/>
            <person name="Hong W."/>
        </authorList>
    </citation>
    <scope>SUBCELLULAR LOCATION</scope>
</reference>
<reference key="3">
    <citation type="journal article" date="2007" name="EMBO J.">
        <title>Early endosomal SNAREs form a structurally conserved SNARE complex and fuse liposomes with multiple topologies.</title>
        <authorList>
            <person name="Zwilling D."/>
            <person name="Cypionka A."/>
            <person name="Pohl W.H."/>
            <person name="Fasshauer D."/>
            <person name="Walla P.J."/>
            <person name="Wahl M.C."/>
            <person name="Jahn R."/>
        </authorList>
    </citation>
    <scope>X-RAY CRYSTALLOGRAPHY (2.50 ANGSTROMS) OF 122-199 IN COMPLEX WITH STX6; STX12; VTI1A AND VAMP4</scope>
    <scope>FUNCTION</scope>
</reference>
<sequence length="224" mass="26043">MSADFEGYEQDFAVLTAEITSKISRVPRLPPDEKKQMVANVEKQLEEARELLEQMDLEVREIPPQSRGMYSNRMRSYKQEMGKLETDFKRSRIAYSDEVRNELLGDAGNSSENQLIKLREERAHLLDNTERLERSSRRLEAGYQIAVETEQIGQEMLENLSHDRERIQRARERLRETDANLGKSSRILTGMLRRIIQNRILLVILGIIVVITILTAITFFVRGH</sequence>
<organism>
    <name type="scientific">Rattus norvegicus</name>
    <name type="common">Rat</name>
    <dbReference type="NCBI Taxonomy" id="10116"/>
    <lineage>
        <taxon>Eukaryota</taxon>
        <taxon>Metazoa</taxon>
        <taxon>Chordata</taxon>
        <taxon>Craniata</taxon>
        <taxon>Vertebrata</taxon>
        <taxon>Euteleostomi</taxon>
        <taxon>Mammalia</taxon>
        <taxon>Eutheria</taxon>
        <taxon>Euarchontoglires</taxon>
        <taxon>Glires</taxon>
        <taxon>Rodentia</taxon>
        <taxon>Myomorpha</taxon>
        <taxon>Muroidea</taxon>
        <taxon>Muridae</taxon>
        <taxon>Murinae</taxon>
        <taxon>Rattus</taxon>
    </lineage>
</organism>
<proteinExistence type="evidence at protein level"/>
<comment type="function">
    <text evidence="1 3">V-SNARE that mediates vesicle transport pathways through interactions with t-SNAREs on the target membrane. These interactions are proposed to mediate aspects of the specificity of vesicle trafficking and to promote fusion of the lipid bilayers. Involved in vesicular transport from the late endosomes to the trans-Golgi network. Along with VAMP7, involved in an non-conventional RAB1-dependent traffic route to the cell surface used by KCNIP1 and KCND2 (By similarity). May be concerned with increased secretion of cytokines associated with cellular senescence.</text>
</comment>
<comment type="subunit">
    <text evidence="1 3">Interacts with distinct SNARE complexes that contain either STX5 or STX6 (By similarity). Interacts with NAPA and, to a lesser extent, with NAPG (By similarity). Identified in a complex containing STX6, STX12, VAMP4 and VTI1A.</text>
</comment>
<comment type="interaction">
    <interactant intactId="EBI-7573650">
        <id>Q9JI51</id>
    </interactant>
    <interactant intactId="EBI-647443">
        <id>Q9R0N3</id>
        <label>Syt11</label>
    </interactant>
    <organismsDiffer>true</organismsDiffer>
    <experiments>2</experiments>
</comment>
<comment type="subcellular location">
    <subcellularLocation>
        <location evidence="4">Membrane</location>
        <topology evidence="4">Single-pass type IV membrane protein</topology>
    </subcellularLocation>
    <subcellularLocation>
        <location evidence="4">Cytoplasmic vesicle</location>
        <location evidence="4">Secretory vesicle</location>
        <location evidence="4">Synaptic vesicle membrane</location>
        <topology evidence="4">Single-pass type IV membrane protein</topology>
    </subcellularLocation>
    <subcellularLocation>
        <location evidence="4">Cytoplasmic vesicle</location>
        <location evidence="4">Clathrin-coated vesicle membrane</location>
        <topology evidence="4">Single-pass type IV membrane protein</topology>
    </subcellularLocation>
    <subcellularLocation>
        <location evidence="4">Golgi apparatus membrane</location>
        <topology evidence="4">Single-pass type IV membrane protein</topology>
    </subcellularLocation>
    <text>Mainly associated with the Golgi apparatus. Enriched in small synaptic vesicles and clathrin-coated vesicles from nerve terminals. Isoform 1/VTI1A localizes to the cell bodies of hippocampal neurons as well as to nerve terminals.</text>
</comment>
<comment type="alternative products">
    <event type="alternative splicing"/>
    <isoform>
        <id>Q9JI51-1</id>
        <name>2</name>
        <name>VTI1A-beta</name>
        <sequence type="displayed"/>
    </isoform>
    <isoform>
        <id>Q9JI51-2</id>
        <name>1</name>
        <name>VTI1A</name>
        <sequence type="described" ref="VSP_006754"/>
    </isoform>
</comment>
<comment type="tissue specificity">
    <text>Specifically expressed in the neuronal tissues cerebellum, cortex and hippocampus. Isoform 1/VTI1A is expressed in the same neuronal tissues but also in lung, liver, kidney and spleen.</text>
</comment>
<comment type="similarity">
    <text evidence="6">Belongs to the VTI1 family.</text>
</comment>
<gene>
    <name type="primary">Vti1a</name>
    <name type="synonym">Vti1l2</name>
</gene>
<protein>
    <recommendedName>
        <fullName>Vesicle transport through interaction with t-SNAREs homolog 1A</fullName>
    </recommendedName>
    <alternativeName>
        <fullName>Vesicle transport v-SNARE protein Vti1-like 2</fullName>
    </alternativeName>
    <alternativeName>
        <fullName>Vti1-rp2</fullName>
    </alternativeName>
</protein>
<dbReference type="EMBL" id="AF262222">
    <property type="protein sequence ID" value="AAF97791.1"/>
    <property type="molecule type" value="mRNA"/>
</dbReference>
<dbReference type="EMBL" id="AF262221">
    <property type="protein sequence ID" value="AAF97790.1"/>
    <property type="molecule type" value="mRNA"/>
</dbReference>
<dbReference type="RefSeq" id="NP_075589.1">
    <molecule id="Q9JI51-2"/>
    <property type="nucleotide sequence ID" value="NM_023101.1"/>
</dbReference>
<dbReference type="RefSeq" id="XP_038945999.1">
    <molecule id="Q9JI51-1"/>
    <property type="nucleotide sequence ID" value="XM_039090071.2"/>
</dbReference>
<dbReference type="PDB" id="2NPS">
    <property type="method" value="X-ray"/>
    <property type="resolution" value="2.50 A"/>
    <property type="chains" value="C=122-199"/>
</dbReference>
<dbReference type="PDBsum" id="2NPS"/>
<dbReference type="SMR" id="Q9JI51"/>
<dbReference type="BioGRID" id="249335">
    <property type="interactions" value="1"/>
</dbReference>
<dbReference type="CORUM" id="Q9JI51"/>
<dbReference type="FunCoup" id="Q9JI51">
    <property type="interactions" value="3529"/>
</dbReference>
<dbReference type="IntAct" id="Q9JI51">
    <property type="interactions" value="4"/>
</dbReference>
<dbReference type="MINT" id="Q9JI51"/>
<dbReference type="STRING" id="10116.ENSRNOP00000058953"/>
<dbReference type="PhosphoSitePlus" id="Q9JI51"/>
<dbReference type="PaxDb" id="10116-ENSRNOP00000058953"/>
<dbReference type="Ensembl" id="ENSRNOT00000108016.1">
    <molecule id="Q9JI51-2"/>
    <property type="protein sequence ID" value="ENSRNOP00000083070.1"/>
    <property type="gene ID" value="ENSRNOG00000042786.5"/>
</dbReference>
<dbReference type="GeneID" id="65277"/>
<dbReference type="KEGG" id="rno:65277"/>
<dbReference type="UCSC" id="RGD:621490">
    <molecule id="Q9JI51-1"/>
    <property type="organism name" value="rat"/>
</dbReference>
<dbReference type="AGR" id="RGD:621490"/>
<dbReference type="CTD" id="143187"/>
<dbReference type="RGD" id="621490">
    <property type="gene designation" value="Vti1a"/>
</dbReference>
<dbReference type="eggNOG" id="KOG1666">
    <property type="taxonomic scope" value="Eukaryota"/>
</dbReference>
<dbReference type="GeneTree" id="ENSGT00950000183192"/>
<dbReference type="InParanoid" id="Q9JI51"/>
<dbReference type="OMA" id="MEYEAND"/>
<dbReference type="OrthoDB" id="430637at2759"/>
<dbReference type="PhylomeDB" id="Q9JI51"/>
<dbReference type="Reactome" id="R-RNO-6811438">
    <property type="pathway name" value="Intra-Golgi traffic"/>
</dbReference>
<dbReference type="Reactome" id="R-RNO-6811440">
    <property type="pathway name" value="Retrograde transport at the Trans-Golgi-Network"/>
</dbReference>
<dbReference type="EvolutionaryTrace" id="Q9JI51"/>
<dbReference type="PRO" id="PR:Q9JI51"/>
<dbReference type="Proteomes" id="UP000002494">
    <property type="component" value="Chromosome 1"/>
</dbReference>
<dbReference type="GO" id="GO:0005776">
    <property type="term" value="C:autophagosome"/>
    <property type="evidence" value="ECO:0000266"/>
    <property type="project" value="RGD"/>
</dbReference>
<dbReference type="GO" id="GO:0030136">
    <property type="term" value="C:clathrin-coated vesicle"/>
    <property type="evidence" value="ECO:0000314"/>
    <property type="project" value="RGD"/>
</dbReference>
<dbReference type="GO" id="GO:0030665">
    <property type="term" value="C:clathrin-coated vesicle membrane"/>
    <property type="evidence" value="ECO:0007669"/>
    <property type="project" value="UniProtKB-SubCell"/>
</dbReference>
<dbReference type="GO" id="GO:0005829">
    <property type="term" value="C:cytosol"/>
    <property type="evidence" value="ECO:0007669"/>
    <property type="project" value="GOC"/>
</dbReference>
<dbReference type="GO" id="GO:0005789">
    <property type="term" value="C:endoplasmic reticulum membrane"/>
    <property type="evidence" value="ECO:0000318"/>
    <property type="project" value="GO_Central"/>
</dbReference>
<dbReference type="GO" id="GO:0005768">
    <property type="term" value="C:endosome"/>
    <property type="evidence" value="ECO:0000314"/>
    <property type="project" value="ParkinsonsUK-UCL"/>
</dbReference>
<dbReference type="GO" id="GO:0012507">
    <property type="term" value="C:ER to Golgi transport vesicle membrane"/>
    <property type="evidence" value="ECO:0000318"/>
    <property type="project" value="GO_Central"/>
</dbReference>
<dbReference type="GO" id="GO:0005794">
    <property type="term" value="C:Golgi apparatus"/>
    <property type="evidence" value="ECO:0000266"/>
    <property type="project" value="RGD"/>
</dbReference>
<dbReference type="GO" id="GO:0000139">
    <property type="term" value="C:Golgi membrane"/>
    <property type="evidence" value="ECO:0007669"/>
    <property type="project" value="UniProtKB-SubCell"/>
</dbReference>
<dbReference type="GO" id="GO:0098686">
    <property type="term" value="C:hippocampal mossy fiber to CA3 synapse"/>
    <property type="evidence" value="ECO:0000314"/>
    <property type="project" value="SynGO"/>
</dbReference>
<dbReference type="GO" id="GO:0031902">
    <property type="term" value="C:late endosome membrane"/>
    <property type="evidence" value="ECO:0000318"/>
    <property type="project" value="GO_Central"/>
</dbReference>
<dbReference type="GO" id="GO:0044306">
    <property type="term" value="C:neuron projection terminus"/>
    <property type="evidence" value="ECO:0000314"/>
    <property type="project" value="ParkinsonsUK-UCL"/>
</dbReference>
<dbReference type="GO" id="GO:0043025">
    <property type="term" value="C:neuronal cell body"/>
    <property type="evidence" value="ECO:0000314"/>
    <property type="project" value="ParkinsonsUK-UCL"/>
</dbReference>
<dbReference type="GO" id="GO:0048471">
    <property type="term" value="C:perinuclear region of cytoplasm"/>
    <property type="evidence" value="ECO:0000314"/>
    <property type="project" value="ParkinsonsUK-UCL"/>
</dbReference>
<dbReference type="GO" id="GO:0031201">
    <property type="term" value="C:SNARE complex"/>
    <property type="evidence" value="ECO:0000314"/>
    <property type="project" value="ParkinsonsUK-UCL"/>
</dbReference>
<dbReference type="GO" id="GO:0008021">
    <property type="term" value="C:synaptic vesicle"/>
    <property type="evidence" value="ECO:0000314"/>
    <property type="project" value="ParkinsonsUK-UCL"/>
</dbReference>
<dbReference type="GO" id="GO:0030672">
    <property type="term" value="C:synaptic vesicle membrane"/>
    <property type="evidence" value="ECO:0000314"/>
    <property type="project" value="SynGO"/>
</dbReference>
<dbReference type="GO" id="GO:0043195">
    <property type="term" value="C:terminal bouton"/>
    <property type="evidence" value="ECO:0007005"/>
    <property type="project" value="ParkinsonsUK-UCL"/>
</dbReference>
<dbReference type="GO" id="GO:0005484">
    <property type="term" value="F:SNAP receptor activity"/>
    <property type="evidence" value="ECO:0000266"/>
    <property type="project" value="RGD"/>
</dbReference>
<dbReference type="GO" id="GO:0000149">
    <property type="term" value="F:SNARE binding"/>
    <property type="evidence" value="ECO:0000318"/>
    <property type="project" value="GO_Central"/>
</dbReference>
<dbReference type="GO" id="GO:0006914">
    <property type="term" value="P:autophagy"/>
    <property type="evidence" value="ECO:0000266"/>
    <property type="project" value="RGD"/>
</dbReference>
<dbReference type="GO" id="GO:0032456">
    <property type="term" value="P:endocytic recycling"/>
    <property type="evidence" value="ECO:0000266"/>
    <property type="project" value="RGD"/>
</dbReference>
<dbReference type="GO" id="GO:0006888">
    <property type="term" value="P:endoplasmic reticulum to Golgi vesicle-mediated transport"/>
    <property type="evidence" value="ECO:0000314"/>
    <property type="project" value="RGD"/>
</dbReference>
<dbReference type="GO" id="GO:0006896">
    <property type="term" value="P:Golgi to vacuole transport"/>
    <property type="evidence" value="ECO:0000318"/>
    <property type="project" value="GO_Central"/>
</dbReference>
<dbReference type="GO" id="GO:0006891">
    <property type="term" value="P:intra-Golgi vesicle-mediated transport"/>
    <property type="evidence" value="ECO:0000318"/>
    <property type="project" value="GO_Central"/>
</dbReference>
<dbReference type="GO" id="GO:0006886">
    <property type="term" value="P:intracellular protein transport"/>
    <property type="evidence" value="ECO:0007669"/>
    <property type="project" value="InterPro"/>
</dbReference>
<dbReference type="GO" id="GO:0016236">
    <property type="term" value="P:macroautophagy"/>
    <property type="evidence" value="ECO:0000318"/>
    <property type="project" value="GO_Central"/>
</dbReference>
<dbReference type="GO" id="GO:0042147">
    <property type="term" value="P:retrograde transport, endosome to Golgi"/>
    <property type="evidence" value="ECO:0000250"/>
    <property type="project" value="UniProtKB"/>
</dbReference>
<dbReference type="GO" id="GO:0016189">
    <property type="term" value="P:synaptic vesicle to endosome fusion"/>
    <property type="evidence" value="ECO:0000314"/>
    <property type="project" value="SynGO"/>
</dbReference>
<dbReference type="GO" id="GO:0048280">
    <property type="term" value="P:vesicle fusion with Golgi apparatus"/>
    <property type="evidence" value="ECO:0000314"/>
    <property type="project" value="RGD"/>
</dbReference>
<dbReference type="GO" id="GO:0050882">
    <property type="term" value="P:voluntary musculoskeletal movement"/>
    <property type="evidence" value="ECO:0000266"/>
    <property type="project" value="RGD"/>
</dbReference>
<dbReference type="CDD" id="cd15891">
    <property type="entry name" value="SNARE_Vti1a"/>
    <property type="match status" value="1"/>
</dbReference>
<dbReference type="DisProt" id="DP01499"/>
<dbReference type="FunFam" id="1.20.5.110:FF:000078">
    <property type="entry name" value="Vesicle transport through interaction with t-SNAREs 1A"/>
    <property type="match status" value="1"/>
</dbReference>
<dbReference type="FunFam" id="1.20.58.400:FF:000001">
    <property type="entry name" value="Vesicle transport through interaction with t-SNAREs homolog 1A"/>
    <property type="match status" value="1"/>
</dbReference>
<dbReference type="Gene3D" id="1.20.5.110">
    <property type="match status" value="1"/>
</dbReference>
<dbReference type="Gene3D" id="1.20.58.400">
    <property type="entry name" value="t-snare proteins"/>
    <property type="match status" value="1"/>
</dbReference>
<dbReference type="InterPro" id="IPR027027">
    <property type="entry name" value="GOSR2/Membrin/Bos1"/>
</dbReference>
<dbReference type="InterPro" id="IPR010989">
    <property type="entry name" value="SNARE"/>
</dbReference>
<dbReference type="InterPro" id="IPR000727">
    <property type="entry name" value="T_SNARE_dom"/>
</dbReference>
<dbReference type="InterPro" id="IPR038407">
    <property type="entry name" value="v-SNARE_N_sf"/>
</dbReference>
<dbReference type="InterPro" id="IPR007705">
    <property type="entry name" value="Vesicle_trsprt_v-SNARE_N"/>
</dbReference>
<dbReference type="PANTHER" id="PTHR21230:SF26">
    <property type="entry name" value="VESICLE TRANSPORT THROUGH INTERACTION WITH T-SNARES HOMOLOG 1A"/>
    <property type="match status" value="1"/>
</dbReference>
<dbReference type="PANTHER" id="PTHR21230">
    <property type="entry name" value="VESICLE TRANSPORT V-SNARE PROTEIN VTI1-RELATED"/>
    <property type="match status" value="1"/>
</dbReference>
<dbReference type="Pfam" id="PF05008">
    <property type="entry name" value="V-SNARE"/>
    <property type="match status" value="1"/>
</dbReference>
<dbReference type="Pfam" id="PF12352">
    <property type="entry name" value="V-SNARE_C"/>
    <property type="match status" value="1"/>
</dbReference>
<dbReference type="PIRSF" id="PIRSF028865">
    <property type="entry name" value="Membrin-2"/>
    <property type="match status" value="1"/>
</dbReference>
<dbReference type="SMART" id="SM00397">
    <property type="entry name" value="t_SNARE"/>
    <property type="match status" value="1"/>
</dbReference>
<dbReference type="SUPFAM" id="SSF58038">
    <property type="entry name" value="SNARE fusion complex"/>
    <property type="match status" value="1"/>
</dbReference>
<dbReference type="SUPFAM" id="SSF47661">
    <property type="entry name" value="t-snare proteins"/>
    <property type="match status" value="1"/>
</dbReference>
<evidence type="ECO:0000250" key="1"/>
<evidence type="ECO:0000255" key="2"/>
<evidence type="ECO:0000269" key="3">
    <source>
    </source>
</evidence>
<evidence type="ECO:0000269" key="4">
    <source>
    </source>
</evidence>
<evidence type="ECO:0000303" key="5">
    <source>
    </source>
</evidence>
<evidence type="ECO:0000305" key="6"/>
<evidence type="ECO:0007829" key="7">
    <source>
        <dbReference type="PDB" id="2NPS"/>
    </source>
</evidence>
<keyword id="KW-0002">3D-structure</keyword>
<keyword id="KW-0025">Alternative splicing</keyword>
<keyword id="KW-0175">Coiled coil</keyword>
<keyword id="KW-0968">Cytoplasmic vesicle</keyword>
<keyword id="KW-0333">Golgi apparatus</keyword>
<keyword id="KW-0472">Membrane</keyword>
<keyword id="KW-0653">Protein transport</keyword>
<keyword id="KW-1185">Reference proteome</keyword>
<keyword id="KW-0770">Synapse</keyword>
<keyword id="KW-0812">Transmembrane</keyword>
<keyword id="KW-1133">Transmembrane helix</keyword>
<keyword id="KW-0813">Transport</keyword>
<feature type="chain" id="PRO_0000218227" description="Vesicle transport through interaction with t-SNAREs homolog 1A">
    <location>
        <begin position="1"/>
        <end position="224"/>
    </location>
</feature>
<feature type="topological domain" description="Cytoplasmic" evidence="2">
    <location>
        <begin position="1"/>
        <end position="199"/>
    </location>
</feature>
<feature type="transmembrane region" description="Helical; Anchor for type IV membrane protein" evidence="2">
    <location>
        <begin position="200"/>
        <end position="220"/>
    </location>
</feature>
<feature type="topological domain" description="Vesicular" evidence="2">
    <location>
        <begin position="221"/>
        <end position="224"/>
    </location>
</feature>
<feature type="coiled-coil region" evidence="2">
    <location>
        <begin position="31"/>
        <end position="92"/>
    </location>
</feature>
<feature type="coiled-coil region" evidence="2">
    <location>
        <begin position="106"/>
        <end position="185"/>
    </location>
</feature>
<feature type="splice variant" id="VSP_006754" description="In isoform 1." evidence="5">
    <location>
        <begin position="115"/>
        <end position="121"/>
    </location>
</feature>
<feature type="helix" evidence="7">
    <location>
        <begin position="124"/>
        <end position="136"/>
    </location>
</feature>
<feature type="helix" evidence="7">
    <location>
        <begin position="138"/>
        <end position="194"/>
    </location>
</feature>
<accession>Q9JI51</accession>
<accession>Q9JI52</accession>
<name>VTI1A_RAT</name>